<dbReference type="EC" id="3.1.-.-" evidence="2"/>
<dbReference type="EMBL" id="ABYN01000046">
    <property type="protein sequence ID" value="EEH69891.1"/>
    <property type="molecule type" value="Genomic_DNA"/>
</dbReference>
<dbReference type="RefSeq" id="WP_008942236.1">
    <property type="nucleotide sequence ID" value="NZ_GG665962.1"/>
</dbReference>
<dbReference type="PDB" id="6VM6">
    <property type="method" value="X-ray"/>
    <property type="resolution" value="2.10 A"/>
    <property type="chains" value="A/B/C/D/E/F=2-462"/>
</dbReference>
<dbReference type="PDB" id="6WAM">
    <property type="method" value="X-ray"/>
    <property type="resolution" value="2.60 A"/>
    <property type="chains" value="A/B/C/D/E/F=2-462"/>
</dbReference>
<dbReference type="PDB" id="6WAN">
    <property type="method" value="X-ray"/>
    <property type="resolution" value="2.40 A"/>
    <property type="chains" value="A/B/C/D/E/F=2-462"/>
</dbReference>
<dbReference type="PDBsum" id="6VM6"/>
<dbReference type="PDBsum" id="6WAM"/>
<dbReference type="PDBsum" id="6WAN"/>
<dbReference type="SMR" id="C0VHC9"/>
<dbReference type="eggNOG" id="ENOG50330SX">
    <property type="taxonomic scope" value="Bacteria"/>
</dbReference>
<dbReference type="HOGENOM" id="CLU_044448_0_0_6"/>
<dbReference type="Proteomes" id="UP000012347">
    <property type="component" value="Unassembled WGS sequence"/>
</dbReference>
<dbReference type="GO" id="GO:0003677">
    <property type="term" value="F:DNA binding"/>
    <property type="evidence" value="ECO:0007669"/>
    <property type="project" value="UniProtKB-KW"/>
</dbReference>
<dbReference type="GO" id="GO:0004519">
    <property type="term" value="F:endonuclease activity"/>
    <property type="evidence" value="ECO:0007669"/>
    <property type="project" value="UniProtKB-KW"/>
</dbReference>
<dbReference type="GO" id="GO:0046872">
    <property type="term" value="F:metal ion binding"/>
    <property type="evidence" value="ECO:0007669"/>
    <property type="project" value="UniProtKB-KW"/>
</dbReference>
<dbReference type="GO" id="GO:0000166">
    <property type="term" value="F:nucleotide binding"/>
    <property type="evidence" value="ECO:0007669"/>
    <property type="project" value="UniProtKB-KW"/>
</dbReference>
<dbReference type="GO" id="GO:0051607">
    <property type="term" value="P:defense response to virus"/>
    <property type="evidence" value="ECO:0007669"/>
    <property type="project" value="UniProtKB-KW"/>
</dbReference>
<dbReference type="InterPro" id="IPR025382">
    <property type="entry name" value="Cap4-like_endonuclease_dom"/>
</dbReference>
<dbReference type="InterPro" id="IPR040836">
    <property type="entry name" value="SAVED"/>
</dbReference>
<dbReference type="NCBIfam" id="NF033611">
    <property type="entry name" value="SAVED"/>
    <property type="match status" value="1"/>
</dbReference>
<dbReference type="Pfam" id="PF14130">
    <property type="entry name" value="Cap4_nuclease"/>
    <property type="match status" value="1"/>
</dbReference>
<dbReference type="Pfam" id="PF18145">
    <property type="entry name" value="SAVED"/>
    <property type="match status" value="1"/>
</dbReference>
<name>CAP4_ACIS2</name>
<feature type="chain" id="PRO_0000451850" description="CD-NTase-associated protein 4">
    <location>
        <begin position="1"/>
        <end position="462"/>
    </location>
</feature>
<feature type="region of interest" description="N-terminal endonuclease domain" evidence="6">
    <location>
        <begin position="1"/>
        <end position="226"/>
    </location>
</feature>
<feature type="region of interest" description="C-terminal SAVED domain" evidence="6">
    <location>
        <begin position="235"/>
        <end position="462"/>
    </location>
</feature>
<feature type="active site" evidence="1">
    <location>
        <position position="50"/>
    </location>
</feature>
<feature type="active site" evidence="1">
    <location>
        <position position="67"/>
    </location>
</feature>
<feature type="active site" evidence="1">
    <location>
        <position position="69"/>
    </location>
</feature>
<feature type="binding site" evidence="1">
    <location>
        <position position="50"/>
    </location>
    <ligand>
        <name>Mg(2+)</name>
        <dbReference type="ChEBI" id="CHEBI:18420"/>
    </ligand>
</feature>
<feature type="binding site" evidence="2">
    <location>
        <begin position="299"/>
        <end position="301"/>
    </location>
    <ligand>
        <name>2',3',3'-c-tri-AMP</name>
        <dbReference type="ChEBI" id="CHEBI:156512"/>
    </ligand>
</feature>
<feature type="binding site" evidence="2">
    <location>
        <position position="449"/>
    </location>
    <ligand>
        <name>2',3',3'-c-tri-AMP</name>
        <dbReference type="ChEBI" id="CHEBI:156512"/>
    </ligand>
</feature>
<feature type="binding site" evidence="2">
    <location>
        <position position="454"/>
    </location>
    <ligand>
        <name>2',3',3'-c-tri-AMP</name>
        <dbReference type="ChEBI" id="CHEBI:156512"/>
    </ligand>
</feature>
<feature type="mutagenesis site" description="Required for nuclease activity, still binds ligand." evidence="2">
    <location>
        <begin position="1"/>
        <end position="18"/>
    </location>
</feature>
<feature type="mutagenesis site" description="Loss of nuclease activity, still binds ligand." evidence="2">
    <original>K</original>
    <variation>A</variation>
    <location>
        <position position="69"/>
    </location>
</feature>
<feature type="mutagenesis site" description="Greatly reduced DNase activity." evidence="2">
    <original>K</original>
    <variation>A</variation>
    <location>
        <position position="299"/>
    </location>
</feature>
<feature type="mutagenesis site" description="Greatly reduced DNase activity." evidence="2">
    <original>R</original>
    <variation>A</variation>
    <location>
        <position position="301"/>
    </location>
</feature>
<feature type="mutagenesis site" description="Greatly reduced DNase activity." evidence="2">
    <original>H</original>
    <variation>A</variation>
    <location>
        <position position="324"/>
    </location>
</feature>
<feature type="mutagenesis site" description="Greatly reduced DNase activity." evidence="2">
    <original>N</original>
    <variation>A</variation>
    <location>
        <position position="325"/>
    </location>
</feature>
<feature type="mutagenesis site" description="Greatly reduced DNase activity." evidence="2">
    <original>K</original>
    <variation>A</variation>
    <location>
        <position position="425"/>
    </location>
</feature>
<feature type="mutagenesis site" description="Greatly reduced DNase activity." evidence="2">
    <original>W</original>
    <variation>A</variation>
    <location>
        <position position="449"/>
    </location>
</feature>
<feature type="helix" evidence="11">
    <location>
        <begin position="21"/>
        <end position="35"/>
    </location>
</feature>
<feature type="strand" evidence="11">
    <location>
        <begin position="40"/>
        <end position="44"/>
    </location>
</feature>
<feature type="strand" evidence="11">
    <location>
        <begin position="50"/>
        <end position="55"/>
    </location>
</feature>
<feature type="strand" evidence="11">
    <location>
        <begin position="58"/>
        <end position="60"/>
    </location>
</feature>
<feature type="strand" evidence="11">
    <location>
        <begin position="62"/>
        <end position="68"/>
    </location>
</feature>
<feature type="helix" evidence="11">
    <location>
        <begin position="75"/>
        <end position="91"/>
    </location>
</feature>
<feature type="strand" evidence="11">
    <location>
        <begin position="96"/>
        <end position="104"/>
    </location>
</feature>
<feature type="turn" evidence="11">
    <location>
        <begin position="108"/>
        <end position="110"/>
    </location>
</feature>
<feature type="helix" evidence="11">
    <location>
        <begin position="111"/>
        <end position="120"/>
    </location>
</feature>
<feature type="helix" evidence="11">
    <location>
        <begin position="134"/>
        <end position="147"/>
    </location>
</feature>
<feature type="helix" evidence="11">
    <location>
        <begin position="152"/>
        <end position="161"/>
    </location>
</feature>
<feature type="strand" evidence="11">
    <location>
        <begin position="162"/>
        <end position="166"/>
    </location>
</feature>
<feature type="strand" evidence="11">
    <location>
        <begin position="169"/>
        <end position="171"/>
    </location>
</feature>
<feature type="helix" evidence="11">
    <location>
        <begin position="172"/>
        <end position="184"/>
    </location>
</feature>
<feature type="helix" evidence="11">
    <location>
        <begin position="190"/>
        <end position="204"/>
    </location>
</feature>
<feature type="helix" evidence="11">
    <location>
        <begin position="205"/>
        <end position="209"/>
    </location>
</feature>
<feature type="helix" evidence="11">
    <location>
        <begin position="214"/>
        <end position="225"/>
    </location>
</feature>
<feature type="helix" evidence="11">
    <location>
        <begin position="226"/>
        <end position="228"/>
    </location>
</feature>
<feature type="helix" evidence="11">
    <location>
        <begin position="229"/>
        <end position="233"/>
    </location>
</feature>
<feature type="strand" evidence="11">
    <location>
        <begin position="240"/>
        <end position="242"/>
    </location>
</feature>
<feature type="helix" evidence="11">
    <location>
        <begin position="256"/>
        <end position="259"/>
    </location>
</feature>
<feature type="helix" evidence="11">
    <location>
        <begin position="263"/>
        <end position="265"/>
    </location>
</feature>
<feature type="helix" evidence="11">
    <location>
        <begin position="268"/>
        <end position="288"/>
    </location>
</feature>
<feature type="strand" evidence="11">
    <location>
        <begin position="293"/>
        <end position="297"/>
    </location>
</feature>
<feature type="helix" evidence="11">
    <location>
        <begin position="302"/>
        <end position="311"/>
    </location>
</feature>
<feature type="turn" evidence="11">
    <location>
        <begin position="314"/>
        <end position="317"/>
    </location>
</feature>
<feature type="strand" evidence="11">
    <location>
        <begin position="319"/>
        <end position="324"/>
    </location>
</feature>
<feature type="strand" evidence="11">
    <location>
        <begin position="327"/>
        <end position="330"/>
    </location>
</feature>
<feature type="strand" evidence="11">
    <location>
        <begin position="343"/>
        <end position="348"/>
    </location>
</feature>
<feature type="strand" evidence="11">
    <location>
        <begin position="354"/>
        <end position="361"/>
    </location>
</feature>
<feature type="helix" evidence="11">
    <location>
        <begin position="367"/>
        <end position="372"/>
    </location>
</feature>
<feature type="helix" evidence="11">
    <location>
        <begin position="375"/>
        <end position="378"/>
    </location>
</feature>
<feature type="strand" evidence="11">
    <location>
        <begin position="382"/>
        <end position="386"/>
    </location>
</feature>
<feature type="helix" evidence="11">
    <location>
        <begin position="394"/>
        <end position="415"/>
    </location>
</feature>
<feature type="strand" evidence="11">
    <location>
        <begin position="418"/>
        <end position="426"/>
    </location>
</feature>
<feature type="helix" evidence="11">
    <location>
        <begin position="428"/>
        <end position="436"/>
    </location>
</feature>
<feature type="strand" evidence="11">
    <location>
        <begin position="443"/>
        <end position="450"/>
    </location>
</feature>
<feature type="strand" evidence="11">
    <location>
        <begin position="453"/>
        <end position="460"/>
    </location>
</feature>
<protein>
    <recommendedName>
        <fullName evidence="3">CD-NTase-associated protein 4</fullName>
        <shortName evidence="3">Cap4</shortName>
        <ecNumber evidence="2">3.1.-.-</ecNumber>
    </recommendedName>
    <alternativeName>
        <fullName evidence="5">Endodeoxyribonuclease Cap4</fullName>
    </alternativeName>
</protein>
<keyword id="KW-0002">3D-structure</keyword>
<keyword id="KW-0051">Antiviral defense</keyword>
<keyword id="KW-0238">DNA-binding</keyword>
<keyword id="KW-0255">Endonuclease</keyword>
<keyword id="KW-0378">Hydrolase</keyword>
<keyword id="KW-0460">Magnesium</keyword>
<keyword id="KW-0479">Metal-binding</keyword>
<keyword id="KW-0540">Nuclease</keyword>
<keyword id="KW-0547">Nucleotide-binding</keyword>
<comment type="function">
    <text evidence="2 4 6">Effector DNase of a CBASS antivirus system (PubMed:32544385). CBASS (cyclic oligonucleotide-based antiphage signaling system) provides immunity against bacteriophage. The CD-NTase protein synthesizes cyclic nucleotides in response to infection; these serve as specific second messenger signals. The signals activate a diverse range of effectors, leading to bacterial cell death and thus abortive phage infection. A type II-C(AAAA) CBASS system (PubMed:32839535).</text>
</comment>
<comment type="function">
    <text evidence="2">Binds cyclic nucleotide second messengers (synthesized by CdnD, the cognate CD-NTase in the CBASS operon). Ligand binding activates it to endonucleolytically degrade dsDNA to approximately 6 bp length fragments, with a preference for 5'-C or 5'-G cleavage site. The minor product of CdnD is the activating nucleotide; also binds the major product (2',3',3'-cyclic AMP-AMP-AMP) but is not activated by it. Only binds DNA in the presence of ligand. Is not activated by c-di-AMP, c-di-GMP, 3'3'-cyclic GMP-AMP (3'3'-cGAMP) or 3',3',3'-cyclic AMP-AMP-GMP.</text>
</comment>
<comment type="cofactor">
    <cofactor evidence="2">
        <name>a divalent metal cation</name>
        <dbReference type="ChEBI" id="CHEBI:60240"/>
    </cofactor>
</comment>
<comment type="activity regulation">
    <text evidence="2">DNase activity is activated upon ligand binding. Inhibited by EDTA.</text>
</comment>
<comment type="subunit">
    <text evidence="2">A monomer in the absence of ligand, in its presence it forms oligomers.</text>
</comment>
<comment type="induction">
    <text evidence="6">Part of the CBASS operon consisting of cdnD-cap2-cap3-cap4.</text>
</comment>
<comment type="domain">
    <text evidence="2">The cyclic nucleotide ligand binds in the C-terminal SAVED domain. DNA binding requires the extreme N-terminus.</text>
</comment>
<comment type="similarity">
    <text evidence="6">Belongs to the Cap4 nuclease family.</text>
</comment>
<proteinExistence type="evidence at protein level"/>
<organism>
    <name type="scientific">Acinetobacter sp. (strain ATCC 27244 / 9458)</name>
    <dbReference type="NCBI Taxonomy" id="525244"/>
    <lineage>
        <taxon>Bacteria</taxon>
        <taxon>Pseudomonadati</taxon>
        <taxon>Pseudomonadota</taxon>
        <taxon>Gammaproteobacteria</taxon>
        <taxon>Moraxellales</taxon>
        <taxon>Moraxellaceae</taxon>
        <taxon>Acinetobacter</taxon>
    </lineage>
</organism>
<evidence type="ECO:0000250" key="1">
    <source>
        <dbReference type="UniProtKB" id="P0DUD5"/>
    </source>
</evidence>
<evidence type="ECO:0000269" key="2">
    <source>
    </source>
</evidence>
<evidence type="ECO:0000303" key="3">
    <source>
    </source>
</evidence>
<evidence type="ECO:0000303" key="4">
    <source>
    </source>
</evidence>
<evidence type="ECO:0000305" key="5"/>
<evidence type="ECO:0000305" key="6">
    <source>
    </source>
</evidence>
<evidence type="ECO:0000312" key="7">
    <source>
        <dbReference type="EMBL" id="EEH69891.1"/>
    </source>
</evidence>
<evidence type="ECO:0007744" key="8">
    <source>
        <dbReference type="PDB" id="6VM6"/>
    </source>
</evidence>
<evidence type="ECO:0007744" key="9">
    <source>
        <dbReference type="PDB" id="6WAM"/>
    </source>
</evidence>
<evidence type="ECO:0007744" key="10">
    <source>
        <dbReference type="PDB" id="6WAN"/>
    </source>
</evidence>
<evidence type="ECO:0007829" key="11">
    <source>
        <dbReference type="PDB" id="6VM6"/>
    </source>
</evidence>
<accession>C0VHC9</accession>
<sequence>MSASLLEKQSTGGAIARVGFGYQDAFVLRSLPLWLSQSAFSHIVSEALSDIEVCYFSSEKSLHVMYEAKNHSLTATEFWDEIRRFKSLFDTHPKNFIWFNLVCPSYNTAISPLISKIDRLRGVGSSYDDDSSVSVNGRSEYLDWCVGKKIDFSLAEFALDYVGFITFNSENSESIFLSEIQDTINIELLRSQVKQLKDQFKNLISRSSFGPIYRKDFENFICHALEEDRSQWLLDPIKINLSASSSQYQDLNLDISDFNGPDRAQKTSSDWNSLIKKAVSIGDFIHNSGDRRTLLIDGKQRMSTACMLGYVFSATRNFLLEIEHNGLIYRTDDHKQKEGQFFTKIEAVEPQGETEAIVAIGFPTAIGKDIDSTINEVKSLPRLNLESSHAIDNMETLNLAVREAKSALVSFKSENKLSKLHLFIKAPSVFAMVLGHRLNGICDIQLYDWVDGQYIPTAELNL</sequence>
<gene>
    <name evidence="3" type="primary">cap4</name>
    <name evidence="7" type="ORF">HMPREF0023_0548</name>
</gene>
<reference key="1">
    <citation type="submission" date="2008-10" db="EMBL/GenBank/DDBJ databases">
        <authorList>
            <person name="Qin X."/>
            <person name="Bachman B."/>
            <person name="Battles P."/>
            <person name="Bell A."/>
            <person name="Bess C."/>
            <person name="Bickham C."/>
            <person name="Chaboub L."/>
            <person name="Chen D."/>
            <person name="Coyle M."/>
            <person name="Deiros D.R."/>
            <person name="Dinh H."/>
            <person name="Forbes L."/>
            <person name="Fowler G."/>
            <person name="Francisco L."/>
            <person name="Fu Q."/>
            <person name="Gubbala S."/>
            <person name="Hale W."/>
            <person name="Han Y."/>
            <person name="Hemphill L."/>
            <person name="Highlander S.K."/>
            <person name="Hirani K."/>
            <person name="Hogues M."/>
            <person name="Jackson L."/>
            <person name="Jakkamsetti A."/>
            <person name="Javaid M."/>
            <person name="Jiang H."/>
            <person name="Korchina V."/>
            <person name="Kovar C."/>
            <person name="Lara F."/>
            <person name="Lee S."/>
            <person name="Mata R."/>
            <person name="Mathew T."/>
            <person name="Moen C."/>
            <person name="Morales K."/>
            <person name="Munidasa M."/>
            <person name="Nazareth L."/>
            <person name="Ngo R."/>
            <person name="Nguyen L."/>
            <person name="Okwuonu G."/>
            <person name="Ongeri F."/>
            <person name="Patil S."/>
            <person name="Petrosino J."/>
            <person name="Pham C."/>
            <person name="Pham P."/>
            <person name="Pu L.-L."/>
            <person name="Puazo M."/>
            <person name="Raj R."/>
            <person name="Reid J."/>
            <person name="Rouhana J."/>
            <person name="Saada N."/>
            <person name="Shang Y."/>
            <person name="Simmons D."/>
            <person name="Thornton R."/>
            <person name="Warren J."/>
            <person name="Weissenberger G."/>
            <person name="Zhang J."/>
            <person name="Zhang L."/>
            <person name="Zhou C."/>
            <person name="Zhu D."/>
            <person name="Muzny D."/>
            <person name="Worley K."/>
            <person name="Gibbs R."/>
        </authorList>
    </citation>
    <scope>NUCLEOTIDE SEQUENCE [LARGE SCALE GENOMIC DNA]</scope>
    <source>
        <strain>ATCC 27244 / 9458</strain>
    </source>
</reference>
<reference key="2">
    <citation type="journal article" date="2020" name="Nat. Microbiol.">
        <title>Diversity and classification of cyclic-oligonucleotide-based anti-phage signalling systems.</title>
        <authorList>
            <person name="Millman A."/>
            <person name="Melamed S."/>
            <person name="Amitai G."/>
            <person name="Sorek R."/>
        </authorList>
    </citation>
    <scope>CLASSIFICATION AND NOMENCLATURE</scope>
</reference>
<reference evidence="8 9 10" key="3">
    <citation type="journal article" date="2020" name="Cell">
        <title>CBASS immunity uses CARF-related effectors to sense 3'-5' and 2'-5'-linked cyclic oligonucleotide signals and protect bacteria from phage infection.</title>
        <authorList>
            <person name="Lowey B."/>
            <person name="Whiteley A.T."/>
            <person name="Keszei A.F.A."/>
            <person name="Morehouse B.R."/>
            <person name="Antine S.P."/>
            <person name="Cabrera V.J."/>
            <person name="Kashin D."/>
            <person name="Schwede F."/>
            <person name="Mekalanos J.J."/>
            <person name="Shao S."/>
            <person name="Lee A.S.Y."/>
            <person name="Kranzusch P.J."/>
        </authorList>
    </citation>
    <scope>X-RAY CRYSTALLOGRAPHY (2.10 ANGSTROMS) OF 2-462 ALONE AND IN COMPLEX WITH CYCLIC NUCLEOTIDES</scope>
    <scope>FUNCTION AS AN ENDONUCLEASE</scope>
    <scope>COFACTOR</scope>
    <scope>ACTIVITY REGULATION</scope>
    <scope>SUBUNIT</scope>
    <scope>NUCLEOTIDE-BINDING</scope>
    <scope>DNA-BINDING</scope>
    <scope>OPERON STRUCTURE</scope>
    <scope>DOMAIN</scope>
    <scope>MUTAGENESIS OF 1-MET--VAL-18; LYS-69; LYS-299; ARG-301; HIS-324; ASN-325; LYS-425 AND TRP-449</scope>
    <source>
        <strain>ATCC 27244 / 9458</strain>
    </source>
</reference>